<accession>P55667</accession>
<protein>
    <recommendedName>
        <fullName>Uncharacterized hydrolase/peptidase y4tM</fullName>
        <ecNumber>3.-.-.-</ecNumber>
    </recommendedName>
</protein>
<organism>
    <name type="scientific">Sinorhizobium fredii (strain NBRC 101917 / NGR234)</name>
    <dbReference type="NCBI Taxonomy" id="394"/>
    <lineage>
        <taxon>Bacteria</taxon>
        <taxon>Pseudomonadati</taxon>
        <taxon>Pseudomonadota</taxon>
        <taxon>Alphaproteobacteria</taxon>
        <taxon>Hyphomicrobiales</taxon>
        <taxon>Rhizobiaceae</taxon>
        <taxon>Sinorhizobium/Ensifer group</taxon>
        <taxon>Sinorhizobium</taxon>
    </lineage>
</organism>
<geneLocation type="plasmid">
    <name>sym pNGR234a</name>
</geneLocation>
<name>Y4TM_SINFN</name>
<gene>
    <name type="ordered locus">NGR_a01460</name>
    <name type="ORF">y4tM</name>
</gene>
<feature type="chain" id="PRO_0000185107" description="Uncharacterized hydrolase/peptidase y4tM">
    <location>
        <begin position="1"/>
        <end position="392"/>
    </location>
</feature>
<evidence type="ECO:0000305" key="1"/>
<proteinExistence type="inferred from homology"/>
<sequence>MRILHFSDAEYQQRMLRVKQRMQAQDIDVLIVTEPANINYLTGYDAWSFYTVQALLVFQDVDLPMWIGRSIDKQSAIVTTNLPDERIIPYPDIYVHSPDRHAAQFIAQMLLREAPRAKTVGVEMGAYYYTARDHAELQKALPNVAFKDAELLVNWVRFIKSEREIAYMREAGVITERMMKRAVEVAAPGVRQCDVAAAIYHAQMSGTENYGGLPATSPPHMGFGERAREPHPIFTDRRIDTNSVANIELSGCRLRYHAPMSRTVYFGRPPQSYRDLASYVIEAVETSLDAVRPGVTCEGIELAWRKSMSAHGIEKENRLGYSIGIAYTPTWGERTASIRRTDLTVLEPGAAFHLMGGLWLANTGITITQSFVVTATGHEPLTATPRELVVKD</sequence>
<reference key="1">
    <citation type="journal article" date="1997" name="Nature">
        <title>Molecular basis of symbiosis between Rhizobium and legumes.</title>
        <authorList>
            <person name="Freiberg C.A."/>
            <person name="Fellay R."/>
            <person name="Bairoch A."/>
            <person name="Broughton W.J."/>
            <person name="Rosenthal A."/>
            <person name="Perret X."/>
        </authorList>
    </citation>
    <scope>NUCLEOTIDE SEQUENCE [LARGE SCALE GENOMIC DNA]</scope>
    <source>
        <strain>NBRC 101917 / NGR234</strain>
    </source>
</reference>
<reference key="2">
    <citation type="journal article" date="2009" name="Appl. Environ. Microbiol.">
        <title>Rhizobium sp. strain NGR234 possesses a remarkable number of secretion systems.</title>
        <authorList>
            <person name="Schmeisser C."/>
            <person name="Liesegang H."/>
            <person name="Krysciak D."/>
            <person name="Bakkou N."/>
            <person name="Le Quere A."/>
            <person name="Wollherr A."/>
            <person name="Heinemeyer I."/>
            <person name="Morgenstern B."/>
            <person name="Pommerening-Roeser A."/>
            <person name="Flores M."/>
            <person name="Palacios R."/>
            <person name="Brenner S."/>
            <person name="Gottschalk G."/>
            <person name="Schmitz R.A."/>
            <person name="Broughton W.J."/>
            <person name="Perret X."/>
            <person name="Strittmatter A.W."/>
            <person name="Streit W.R."/>
        </authorList>
    </citation>
    <scope>NUCLEOTIDE SEQUENCE [LARGE SCALE GENOMIC DNA]</scope>
    <source>
        <strain>NBRC 101917 / NGR234</strain>
    </source>
</reference>
<dbReference type="EC" id="3.-.-.-"/>
<dbReference type="EMBL" id="U00090">
    <property type="protein sequence ID" value="AAB91866.1"/>
    <property type="molecule type" value="Genomic_DNA"/>
</dbReference>
<dbReference type="RefSeq" id="NP_444079.1">
    <property type="nucleotide sequence ID" value="NC_000914.2"/>
</dbReference>
<dbReference type="RefSeq" id="WP_010875184.1">
    <property type="nucleotide sequence ID" value="NC_000914.2"/>
</dbReference>
<dbReference type="SMR" id="P55667"/>
<dbReference type="KEGG" id="rhi:NGR_a01460"/>
<dbReference type="PATRIC" id="fig|394.7.peg.131"/>
<dbReference type="eggNOG" id="COG0006">
    <property type="taxonomic scope" value="Bacteria"/>
</dbReference>
<dbReference type="HOGENOM" id="CLU_017266_3_1_5"/>
<dbReference type="OrthoDB" id="9761809at2"/>
<dbReference type="Proteomes" id="UP000001054">
    <property type="component" value="Plasmid pNGR234a"/>
</dbReference>
<dbReference type="GO" id="GO:0016787">
    <property type="term" value="F:hydrolase activity"/>
    <property type="evidence" value="ECO:0007669"/>
    <property type="project" value="UniProtKB-KW"/>
</dbReference>
<dbReference type="CDD" id="cd01066">
    <property type="entry name" value="APP_MetAP"/>
    <property type="match status" value="1"/>
</dbReference>
<dbReference type="Gene3D" id="3.90.230.10">
    <property type="entry name" value="Creatinase/methionine aminopeptidase superfamily"/>
    <property type="match status" value="1"/>
</dbReference>
<dbReference type="Gene3D" id="3.40.350.10">
    <property type="entry name" value="Creatinase/prolidase N-terminal domain"/>
    <property type="match status" value="1"/>
</dbReference>
<dbReference type="InterPro" id="IPR029149">
    <property type="entry name" value="Creatin/AminoP/Spt16_N"/>
</dbReference>
<dbReference type="InterPro" id="IPR036005">
    <property type="entry name" value="Creatinase/aminopeptidase-like"/>
</dbReference>
<dbReference type="InterPro" id="IPR000587">
    <property type="entry name" value="Creatinase_N"/>
</dbReference>
<dbReference type="InterPro" id="IPR000994">
    <property type="entry name" value="Pept_M24"/>
</dbReference>
<dbReference type="InterPro" id="IPR050659">
    <property type="entry name" value="Peptidase_M24B"/>
</dbReference>
<dbReference type="PANTHER" id="PTHR46112">
    <property type="entry name" value="AMINOPEPTIDASE"/>
    <property type="match status" value="1"/>
</dbReference>
<dbReference type="PANTHER" id="PTHR46112:SF2">
    <property type="entry name" value="XAA-PRO AMINOPEPTIDASE P-RELATED"/>
    <property type="match status" value="1"/>
</dbReference>
<dbReference type="Pfam" id="PF01321">
    <property type="entry name" value="Creatinase_N"/>
    <property type="match status" value="1"/>
</dbReference>
<dbReference type="Pfam" id="PF00557">
    <property type="entry name" value="Peptidase_M24"/>
    <property type="match status" value="1"/>
</dbReference>
<dbReference type="SUPFAM" id="SSF55920">
    <property type="entry name" value="Creatinase/aminopeptidase"/>
    <property type="match status" value="1"/>
</dbReference>
<dbReference type="SUPFAM" id="SSF53092">
    <property type="entry name" value="Creatinase/prolidase N-terminal domain"/>
    <property type="match status" value="1"/>
</dbReference>
<keyword id="KW-0378">Hydrolase</keyword>
<keyword id="KW-0614">Plasmid</keyword>
<keyword id="KW-1185">Reference proteome</keyword>
<comment type="similarity">
    <text evidence="1">Belongs to the peptidase M24 family.</text>
</comment>